<proteinExistence type="inferred from homology"/>
<evidence type="ECO:0000250" key="1"/>
<evidence type="ECO:0000255" key="2">
    <source>
        <dbReference type="PROSITE-ProRule" id="PRU00042"/>
    </source>
</evidence>
<evidence type="ECO:0000256" key="3">
    <source>
        <dbReference type="SAM" id="MobiDB-lite"/>
    </source>
</evidence>
<evidence type="ECO:0000305" key="4"/>
<dbReference type="EMBL" id="AJ238242">
    <property type="protein sequence ID" value="CAB41348.1"/>
    <property type="molecule type" value="Genomic_DNA"/>
</dbReference>
<dbReference type="SMR" id="Q9Y7G2"/>
<dbReference type="VEuPathDB" id="FungiDB:C5_02940C_A"/>
<dbReference type="VEuPathDB" id="FungiDB:CAWG_04675"/>
<dbReference type="GO" id="GO:0005737">
    <property type="term" value="C:cytoplasm"/>
    <property type="evidence" value="ECO:0007669"/>
    <property type="project" value="TreeGrafter"/>
</dbReference>
<dbReference type="GO" id="GO:0005634">
    <property type="term" value="C:nucleus"/>
    <property type="evidence" value="ECO:0007669"/>
    <property type="project" value="UniProtKB-SubCell"/>
</dbReference>
<dbReference type="GO" id="GO:0000978">
    <property type="term" value="F:RNA polymerase II cis-regulatory region sequence-specific DNA binding"/>
    <property type="evidence" value="ECO:0007669"/>
    <property type="project" value="TreeGrafter"/>
</dbReference>
<dbReference type="GO" id="GO:0008270">
    <property type="term" value="F:zinc ion binding"/>
    <property type="evidence" value="ECO:0007669"/>
    <property type="project" value="UniProtKB-KW"/>
</dbReference>
<dbReference type="GO" id="GO:0000433">
    <property type="term" value="P:carbon catabolite repression of transcription from RNA polymerase II promoter by glucose"/>
    <property type="evidence" value="ECO:0007669"/>
    <property type="project" value="TreeGrafter"/>
</dbReference>
<dbReference type="FunFam" id="3.30.160.60:FF:000089">
    <property type="entry name" value="DNA-binding protein creA"/>
    <property type="match status" value="1"/>
</dbReference>
<dbReference type="FunFam" id="3.30.160.60:FF:000152">
    <property type="entry name" value="DNA-binding protein creA"/>
    <property type="match status" value="1"/>
</dbReference>
<dbReference type="Gene3D" id="3.30.160.60">
    <property type="entry name" value="Classic Zinc Finger"/>
    <property type="match status" value="2"/>
</dbReference>
<dbReference type="InterPro" id="IPR051007">
    <property type="entry name" value="creA/MIG_C2H2-ZnF"/>
</dbReference>
<dbReference type="InterPro" id="IPR036236">
    <property type="entry name" value="Znf_C2H2_sf"/>
</dbReference>
<dbReference type="InterPro" id="IPR013087">
    <property type="entry name" value="Znf_C2H2_type"/>
</dbReference>
<dbReference type="PANTHER" id="PTHR47428">
    <property type="entry name" value="REGULATORY PROTEIN MIG1-RELATED"/>
    <property type="match status" value="1"/>
</dbReference>
<dbReference type="PANTHER" id="PTHR47428:SF1">
    <property type="entry name" value="REGULATORY PROTEIN MIG1-RELATED"/>
    <property type="match status" value="1"/>
</dbReference>
<dbReference type="Pfam" id="PF00096">
    <property type="entry name" value="zf-C2H2"/>
    <property type="match status" value="2"/>
</dbReference>
<dbReference type="SMART" id="SM00355">
    <property type="entry name" value="ZnF_C2H2"/>
    <property type="match status" value="2"/>
</dbReference>
<dbReference type="SUPFAM" id="SSF57667">
    <property type="entry name" value="beta-beta-alpha zinc fingers"/>
    <property type="match status" value="1"/>
</dbReference>
<dbReference type="PROSITE" id="PS00028">
    <property type="entry name" value="ZINC_FINGER_C2H2_1"/>
    <property type="match status" value="2"/>
</dbReference>
<dbReference type="PROSITE" id="PS50157">
    <property type="entry name" value="ZINC_FINGER_C2H2_2"/>
    <property type="match status" value="2"/>
</dbReference>
<reference key="1">
    <citation type="journal article" date="2000" name="J. Bacteriol.">
        <title>Isolation of the MIG1 gene from Candida albicans and effects of its disruption on catabolite repression.</title>
        <authorList>
            <person name="Zaragoza O."/>
            <person name="Rodriguez C."/>
            <person name="Gancedo C."/>
        </authorList>
    </citation>
    <scope>NUCLEOTIDE SEQUENCE [GENOMIC DNA]</scope>
</reference>
<name>MIG1_CANAX</name>
<protein>
    <recommendedName>
        <fullName>Regulatory protein MIG1</fullName>
    </recommendedName>
</protein>
<organism>
    <name type="scientific">Candida albicans</name>
    <name type="common">Yeast</name>
    <dbReference type="NCBI Taxonomy" id="5476"/>
    <lineage>
        <taxon>Eukaryota</taxon>
        <taxon>Fungi</taxon>
        <taxon>Dikarya</taxon>
        <taxon>Ascomycota</taxon>
        <taxon>Saccharomycotina</taxon>
        <taxon>Pichiomycetes</taxon>
        <taxon>Debaryomycetaceae</taxon>
        <taxon>Candida/Lodderomyces clade</taxon>
        <taxon>Candida</taxon>
    </lineage>
</organism>
<comment type="function">
    <text>Involved in glucose repression of glucose metabolism genes.</text>
</comment>
<comment type="subcellular location">
    <subcellularLocation>
        <location evidence="1">Nucleus</location>
    </subcellularLocation>
</comment>
<comment type="similarity">
    <text evidence="4">Belongs to the creA/MIG C2H2-type zinc-finger protein family.</text>
</comment>
<gene>
    <name type="primary">MIG1</name>
</gene>
<feature type="chain" id="PRO_0000046878" description="Regulatory protein MIG1">
    <location>
        <begin position="1"/>
        <end position="574"/>
    </location>
</feature>
<feature type="zinc finger region" description="C2H2-type 1" evidence="2">
    <location>
        <begin position="31"/>
        <end position="53"/>
    </location>
</feature>
<feature type="zinc finger region" description="C2H2-type 2" evidence="2">
    <location>
        <begin position="59"/>
        <end position="83"/>
    </location>
</feature>
<feature type="region of interest" description="Disordered" evidence="3">
    <location>
        <begin position="1"/>
        <end position="29"/>
    </location>
</feature>
<feature type="region of interest" description="Disordered" evidence="3">
    <location>
        <begin position="83"/>
        <end position="119"/>
    </location>
</feature>
<feature type="region of interest" description="Disordered" evidence="3">
    <location>
        <begin position="175"/>
        <end position="250"/>
    </location>
</feature>
<feature type="region of interest" description="Disordered" evidence="3">
    <location>
        <begin position="262"/>
        <end position="470"/>
    </location>
</feature>
<feature type="region of interest" description="Disordered" evidence="3">
    <location>
        <begin position="547"/>
        <end position="574"/>
    </location>
</feature>
<feature type="compositionally biased region" description="Basic and acidic residues" evidence="3">
    <location>
        <begin position="14"/>
        <end position="29"/>
    </location>
</feature>
<feature type="compositionally biased region" description="Low complexity" evidence="3">
    <location>
        <begin position="97"/>
        <end position="119"/>
    </location>
</feature>
<feature type="compositionally biased region" description="Low complexity" evidence="3">
    <location>
        <begin position="179"/>
        <end position="208"/>
    </location>
</feature>
<feature type="compositionally biased region" description="Polar residues" evidence="3">
    <location>
        <begin position="209"/>
        <end position="240"/>
    </location>
</feature>
<feature type="compositionally biased region" description="Low complexity" evidence="3">
    <location>
        <begin position="265"/>
        <end position="276"/>
    </location>
</feature>
<feature type="compositionally biased region" description="Polar residues" evidence="3">
    <location>
        <begin position="277"/>
        <end position="288"/>
    </location>
</feature>
<feature type="compositionally biased region" description="Polar residues" evidence="3">
    <location>
        <begin position="296"/>
        <end position="335"/>
    </location>
</feature>
<feature type="compositionally biased region" description="Low complexity" evidence="3">
    <location>
        <begin position="336"/>
        <end position="363"/>
    </location>
</feature>
<feature type="compositionally biased region" description="Low complexity" evidence="3">
    <location>
        <begin position="376"/>
        <end position="396"/>
    </location>
</feature>
<feature type="compositionally biased region" description="Polar residues" evidence="3">
    <location>
        <begin position="433"/>
        <end position="470"/>
    </location>
</feature>
<feature type="compositionally biased region" description="Polar residues" evidence="3">
    <location>
        <begin position="564"/>
        <end position="574"/>
    </location>
</feature>
<sequence length="574" mass="63143">MSMSTHMPTPTPSDTKKMPPKEKKNKDDRPYKCTFCDKAFHRLEHQTRHIRTHTGEKPHACTFPGCVKRFSRSDELTRHLRIHTNPSSRKRKNKNQNMMINPNATTATTTGPAGMAIPTSNLPPGSYAIPNTAIPFSIDRNGNHVYHQPYPVYFVPHANGYMQPMVQTQGVTVVPNTDQQQHQQQQQYHQQQQQYQFQERPQHQQQQQTNIGTNNHLQQNGSAVFSLPSSPTMASAQTPNSGTSSSSESIKLAPLSIPNNISRPQQQQQQQQQQQQIPKSESSTSLYSDGNKLFSRPNSTLHSLGSSPENNNASGPLSGVPTPSFSNLNDYFQQKSNSNNSRLFNASSSSLSSLSGKIRSSSSTNLAGLQRLTPLTSTTNNTNNTTTSNTNNNNMTKPSIIPKQPSSTSLNLEFYNGNNQQQQNYHTHKKSRPNSPSQTPIHLSSSRKSANNSFIISPNETPLQTPLQSPQLKPYQDQPPTNVNINVSAPSDTFIGTAVTEKLNNISSIAGNGTQLPPIRSVLSFTSLVDYPDPKQKNVAPPVVDTTNVARGETNGSNGNNSNAKPMSLTNLLS</sequence>
<keyword id="KW-0119">Carbohydrate metabolism</keyword>
<keyword id="KW-0238">DNA-binding</keyword>
<keyword id="KW-0479">Metal-binding</keyword>
<keyword id="KW-0539">Nucleus</keyword>
<keyword id="KW-0677">Repeat</keyword>
<keyword id="KW-0678">Repressor</keyword>
<keyword id="KW-0804">Transcription</keyword>
<keyword id="KW-0805">Transcription regulation</keyword>
<keyword id="KW-0862">Zinc</keyword>
<keyword id="KW-0863">Zinc-finger</keyword>
<accession>Q9Y7G2</accession>